<dbReference type="EC" id="2.7.1.30" evidence="1"/>
<dbReference type="EMBL" id="CP000909">
    <property type="protein sequence ID" value="ABY36480.1"/>
    <property type="molecule type" value="Genomic_DNA"/>
</dbReference>
<dbReference type="RefSeq" id="WP_012259133.1">
    <property type="nucleotide sequence ID" value="NC_010175.1"/>
</dbReference>
<dbReference type="RefSeq" id="YP_001636869.1">
    <property type="nucleotide sequence ID" value="NC_010175.1"/>
</dbReference>
<dbReference type="SMR" id="A9WJ21"/>
<dbReference type="FunCoup" id="A9WJ21">
    <property type="interactions" value="344"/>
</dbReference>
<dbReference type="STRING" id="324602.Caur_3292"/>
<dbReference type="EnsemblBacteria" id="ABY36480">
    <property type="protein sequence ID" value="ABY36480"/>
    <property type="gene ID" value="Caur_3292"/>
</dbReference>
<dbReference type="KEGG" id="cau:Caur_3292"/>
<dbReference type="PATRIC" id="fig|324602.8.peg.3712"/>
<dbReference type="eggNOG" id="COG0554">
    <property type="taxonomic scope" value="Bacteria"/>
</dbReference>
<dbReference type="HOGENOM" id="CLU_009281_2_3_0"/>
<dbReference type="InParanoid" id="A9WJ21"/>
<dbReference type="UniPathway" id="UPA00618">
    <property type="reaction ID" value="UER00672"/>
</dbReference>
<dbReference type="Proteomes" id="UP000002008">
    <property type="component" value="Chromosome"/>
</dbReference>
<dbReference type="GO" id="GO:0005829">
    <property type="term" value="C:cytosol"/>
    <property type="evidence" value="ECO:0000318"/>
    <property type="project" value="GO_Central"/>
</dbReference>
<dbReference type="GO" id="GO:0005524">
    <property type="term" value="F:ATP binding"/>
    <property type="evidence" value="ECO:0007669"/>
    <property type="project" value="UniProtKB-UniRule"/>
</dbReference>
<dbReference type="GO" id="GO:0004370">
    <property type="term" value="F:glycerol kinase activity"/>
    <property type="evidence" value="ECO:0000250"/>
    <property type="project" value="UniProtKB"/>
</dbReference>
<dbReference type="GO" id="GO:0019563">
    <property type="term" value="P:glycerol catabolic process"/>
    <property type="evidence" value="ECO:0000318"/>
    <property type="project" value="GO_Central"/>
</dbReference>
<dbReference type="GO" id="GO:0006071">
    <property type="term" value="P:glycerol metabolic process"/>
    <property type="evidence" value="ECO:0000250"/>
    <property type="project" value="UniProtKB"/>
</dbReference>
<dbReference type="GO" id="GO:0006072">
    <property type="term" value="P:glycerol-3-phosphate metabolic process"/>
    <property type="evidence" value="ECO:0007669"/>
    <property type="project" value="InterPro"/>
</dbReference>
<dbReference type="CDD" id="cd07769">
    <property type="entry name" value="ASKHA_NBD_FGGY_GK"/>
    <property type="match status" value="1"/>
</dbReference>
<dbReference type="FunFam" id="3.30.420.40:FF:000007">
    <property type="entry name" value="Glycerol kinase"/>
    <property type="match status" value="1"/>
</dbReference>
<dbReference type="FunFam" id="3.30.420.40:FF:000008">
    <property type="entry name" value="Glycerol kinase"/>
    <property type="match status" value="1"/>
</dbReference>
<dbReference type="Gene3D" id="3.30.420.40">
    <property type="match status" value="2"/>
</dbReference>
<dbReference type="HAMAP" id="MF_00186">
    <property type="entry name" value="Glycerol_kin"/>
    <property type="match status" value="1"/>
</dbReference>
<dbReference type="InterPro" id="IPR043129">
    <property type="entry name" value="ATPase_NBD"/>
</dbReference>
<dbReference type="InterPro" id="IPR000577">
    <property type="entry name" value="Carb_kinase_FGGY"/>
</dbReference>
<dbReference type="InterPro" id="IPR018483">
    <property type="entry name" value="Carb_kinase_FGGY_CS"/>
</dbReference>
<dbReference type="InterPro" id="IPR018485">
    <property type="entry name" value="FGGY_C"/>
</dbReference>
<dbReference type="InterPro" id="IPR018484">
    <property type="entry name" value="FGGY_N"/>
</dbReference>
<dbReference type="InterPro" id="IPR005999">
    <property type="entry name" value="Glycerol_kin"/>
</dbReference>
<dbReference type="NCBIfam" id="TIGR01311">
    <property type="entry name" value="glycerol_kin"/>
    <property type="match status" value="1"/>
</dbReference>
<dbReference type="NCBIfam" id="NF000756">
    <property type="entry name" value="PRK00047.1"/>
    <property type="match status" value="1"/>
</dbReference>
<dbReference type="PANTHER" id="PTHR10196:SF69">
    <property type="entry name" value="GLYCEROL KINASE"/>
    <property type="match status" value="1"/>
</dbReference>
<dbReference type="PANTHER" id="PTHR10196">
    <property type="entry name" value="SUGAR KINASE"/>
    <property type="match status" value="1"/>
</dbReference>
<dbReference type="Pfam" id="PF02782">
    <property type="entry name" value="FGGY_C"/>
    <property type="match status" value="1"/>
</dbReference>
<dbReference type="Pfam" id="PF00370">
    <property type="entry name" value="FGGY_N"/>
    <property type="match status" value="1"/>
</dbReference>
<dbReference type="PIRSF" id="PIRSF000538">
    <property type="entry name" value="GlpK"/>
    <property type="match status" value="1"/>
</dbReference>
<dbReference type="SUPFAM" id="SSF53067">
    <property type="entry name" value="Actin-like ATPase domain"/>
    <property type="match status" value="2"/>
</dbReference>
<dbReference type="PROSITE" id="PS00933">
    <property type="entry name" value="FGGY_KINASES_1"/>
    <property type="match status" value="1"/>
</dbReference>
<dbReference type="PROSITE" id="PS00445">
    <property type="entry name" value="FGGY_KINASES_2"/>
    <property type="match status" value="1"/>
</dbReference>
<accession>A9WJ21</accession>
<gene>
    <name evidence="1" type="primary">glpK</name>
    <name type="ordered locus">Caur_3292</name>
</gene>
<proteinExistence type="inferred from homology"/>
<sequence length="498" mass="54383">MAKYAAAIDQGTTSTRCMIFDHSGNVICYDQKEHEQIYPRPGWVEHSPDEIWERTQSVIRGALSKGGLSASDIVAVGITNQRETTVVWNRKTGRPVYNAIVWQDTRTDQICNELAADGGQDRFRPKVGLPLATYFSGPKIRWILDNVPGAREAAEAGDVVFGNIDTFLTWWLTGGPNGGVHVTDVTNASRTMLMNLETLDWDDEILGIMGIPRQMLPKIVPSSMVYGTATGELAGVPVAGILGDQQAAMVGQTCFDVGEAKNTYGTGSFMLLNTGTKLVPSKSGLLTTVCYKFGDQPAVYALEGSIAITGALVQWLRDNLGLITSSAEVEALANLVEDNGGIYFVPAFSGLFAPYWRSDARGVIVGLTRYVNKDHLARAVLEATAYQTREVLDAMEQDSGVKLTALKVDGGMVYNNTLMQFQADILGVPVIRPKVAETTSLGAAYAAGLAVGFWSNTDEMRANWGVDHTWTPQMDEATRERLYRGWKKAVTRTFDWVE</sequence>
<evidence type="ECO:0000255" key="1">
    <source>
        <dbReference type="HAMAP-Rule" id="MF_00186"/>
    </source>
</evidence>
<keyword id="KW-0067">ATP-binding</keyword>
<keyword id="KW-0319">Glycerol metabolism</keyword>
<keyword id="KW-0418">Kinase</keyword>
<keyword id="KW-0547">Nucleotide-binding</keyword>
<keyword id="KW-1185">Reference proteome</keyword>
<keyword id="KW-0808">Transferase</keyword>
<name>GLPK_CHLAA</name>
<comment type="function">
    <text evidence="1">Key enzyme in the regulation of glycerol uptake and metabolism. Catalyzes the phosphorylation of glycerol to yield sn-glycerol 3-phosphate.</text>
</comment>
<comment type="catalytic activity">
    <reaction evidence="1">
        <text>glycerol + ATP = sn-glycerol 3-phosphate + ADP + H(+)</text>
        <dbReference type="Rhea" id="RHEA:21644"/>
        <dbReference type="ChEBI" id="CHEBI:15378"/>
        <dbReference type="ChEBI" id="CHEBI:17754"/>
        <dbReference type="ChEBI" id="CHEBI:30616"/>
        <dbReference type="ChEBI" id="CHEBI:57597"/>
        <dbReference type="ChEBI" id="CHEBI:456216"/>
        <dbReference type="EC" id="2.7.1.30"/>
    </reaction>
</comment>
<comment type="activity regulation">
    <text evidence="1">Inhibited by fructose 1,6-bisphosphate (FBP).</text>
</comment>
<comment type="pathway">
    <text evidence="1">Polyol metabolism; glycerol degradation via glycerol kinase pathway; sn-glycerol 3-phosphate from glycerol: step 1/1.</text>
</comment>
<comment type="similarity">
    <text evidence="1">Belongs to the FGGY kinase family.</text>
</comment>
<organism>
    <name type="scientific">Chloroflexus aurantiacus (strain ATCC 29366 / DSM 635 / J-10-fl)</name>
    <dbReference type="NCBI Taxonomy" id="324602"/>
    <lineage>
        <taxon>Bacteria</taxon>
        <taxon>Bacillati</taxon>
        <taxon>Chloroflexota</taxon>
        <taxon>Chloroflexia</taxon>
        <taxon>Chloroflexales</taxon>
        <taxon>Chloroflexineae</taxon>
        <taxon>Chloroflexaceae</taxon>
        <taxon>Chloroflexus</taxon>
    </lineage>
</organism>
<reference key="1">
    <citation type="journal article" date="2011" name="BMC Genomics">
        <title>Complete genome sequence of the filamentous anoxygenic phototrophic bacterium Chloroflexus aurantiacus.</title>
        <authorList>
            <person name="Tang K.H."/>
            <person name="Barry K."/>
            <person name="Chertkov O."/>
            <person name="Dalin E."/>
            <person name="Han C.S."/>
            <person name="Hauser L.J."/>
            <person name="Honchak B.M."/>
            <person name="Karbach L.E."/>
            <person name="Land M.L."/>
            <person name="Lapidus A."/>
            <person name="Larimer F.W."/>
            <person name="Mikhailova N."/>
            <person name="Pitluck S."/>
            <person name="Pierson B.K."/>
            <person name="Blankenship R.E."/>
        </authorList>
    </citation>
    <scope>NUCLEOTIDE SEQUENCE [LARGE SCALE GENOMIC DNA]</scope>
    <source>
        <strain>ATCC 29366 / DSM 635 / J-10-fl</strain>
    </source>
</reference>
<feature type="chain" id="PRO_1000077412" description="Glycerol kinase">
    <location>
        <begin position="1"/>
        <end position="498"/>
    </location>
</feature>
<feature type="binding site" evidence="1">
    <location>
        <position position="12"/>
    </location>
    <ligand>
        <name>ADP</name>
        <dbReference type="ChEBI" id="CHEBI:456216"/>
    </ligand>
</feature>
<feature type="binding site" evidence="1">
    <location>
        <position position="12"/>
    </location>
    <ligand>
        <name>ATP</name>
        <dbReference type="ChEBI" id="CHEBI:30616"/>
    </ligand>
</feature>
<feature type="binding site" evidence="1">
    <location>
        <position position="12"/>
    </location>
    <ligand>
        <name>sn-glycerol 3-phosphate</name>
        <dbReference type="ChEBI" id="CHEBI:57597"/>
    </ligand>
</feature>
<feature type="binding site" evidence="1">
    <location>
        <position position="13"/>
    </location>
    <ligand>
        <name>ATP</name>
        <dbReference type="ChEBI" id="CHEBI:30616"/>
    </ligand>
</feature>
<feature type="binding site" evidence="1">
    <location>
        <position position="14"/>
    </location>
    <ligand>
        <name>ATP</name>
        <dbReference type="ChEBI" id="CHEBI:30616"/>
    </ligand>
</feature>
<feature type="binding site" evidence="1">
    <location>
        <position position="16"/>
    </location>
    <ligand>
        <name>ADP</name>
        <dbReference type="ChEBI" id="CHEBI:456216"/>
    </ligand>
</feature>
<feature type="binding site" evidence="1">
    <location>
        <position position="82"/>
    </location>
    <ligand>
        <name>glycerol</name>
        <dbReference type="ChEBI" id="CHEBI:17754"/>
    </ligand>
</feature>
<feature type="binding site" evidence="1">
    <location>
        <position position="82"/>
    </location>
    <ligand>
        <name>sn-glycerol 3-phosphate</name>
        <dbReference type="ChEBI" id="CHEBI:57597"/>
    </ligand>
</feature>
<feature type="binding site" evidence="1">
    <location>
        <position position="83"/>
    </location>
    <ligand>
        <name>glycerol</name>
        <dbReference type="ChEBI" id="CHEBI:17754"/>
    </ligand>
</feature>
<feature type="binding site" evidence="1">
    <location>
        <position position="83"/>
    </location>
    <ligand>
        <name>sn-glycerol 3-phosphate</name>
        <dbReference type="ChEBI" id="CHEBI:57597"/>
    </ligand>
</feature>
<feature type="binding site" evidence="1">
    <location>
        <position position="134"/>
    </location>
    <ligand>
        <name>glycerol</name>
        <dbReference type="ChEBI" id="CHEBI:17754"/>
    </ligand>
</feature>
<feature type="binding site" evidence="1">
    <location>
        <position position="134"/>
    </location>
    <ligand>
        <name>sn-glycerol 3-phosphate</name>
        <dbReference type="ChEBI" id="CHEBI:57597"/>
    </ligand>
</feature>
<feature type="binding site" evidence="1">
    <location>
        <position position="244"/>
    </location>
    <ligand>
        <name>glycerol</name>
        <dbReference type="ChEBI" id="CHEBI:17754"/>
    </ligand>
</feature>
<feature type="binding site" evidence="1">
    <location>
        <position position="244"/>
    </location>
    <ligand>
        <name>sn-glycerol 3-phosphate</name>
        <dbReference type="ChEBI" id="CHEBI:57597"/>
    </ligand>
</feature>
<feature type="binding site" evidence="1">
    <location>
        <position position="245"/>
    </location>
    <ligand>
        <name>glycerol</name>
        <dbReference type="ChEBI" id="CHEBI:17754"/>
    </ligand>
</feature>
<feature type="binding site" evidence="1">
    <location>
        <position position="266"/>
    </location>
    <ligand>
        <name>ADP</name>
        <dbReference type="ChEBI" id="CHEBI:456216"/>
    </ligand>
</feature>
<feature type="binding site" evidence="1">
    <location>
        <position position="266"/>
    </location>
    <ligand>
        <name>ATP</name>
        <dbReference type="ChEBI" id="CHEBI:30616"/>
    </ligand>
</feature>
<feature type="binding site" evidence="1">
    <location>
        <position position="310"/>
    </location>
    <ligand>
        <name>ADP</name>
        <dbReference type="ChEBI" id="CHEBI:456216"/>
    </ligand>
</feature>
<feature type="binding site" evidence="1">
    <location>
        <position position="310"/>
    </location>
    <ligand>
        <name>ATP</name>
        <dbReference type="ChEBI" id="CHEBI:30616"/>
    </ligand>
</feature>
<feature type="binding site" evidence="1">
    <location>
        <position position="314"/>
    </location>
    <ligand>
        <name>ATP</name>
        <dbReference type="ChEBI" id="CHEBI:30616"/>
    </ligand>
</feature>
<feature type="binding site" evidence="1">
    <location>
        <position position="411"/>
    </location>
    <ligand>
        <name>ADP</name>
        <dbReference type="ChEBI" id="CHEBI:456216"/>
    </ligand>
</feature>
<feature type="binding site" evidence="1">
    <location>
        <position position="411"/>
    </location>
    <ligand>
        <name>ATP</name>
        <dbReference type="ChEBI" id="CHEBI:30616"/>
    </ligand>
</feature>
<feature type="binding site" evidence="1">
    <location>
        <position position="415"/>
    </location>
    <ligand>
        <name>ADP</name>
        <dbReference type="ChEBI" id="CHEBI:456216"/>
    </ligand>
</feature>
<protein>
    <recommendedName>
        <fullName evidence="1">Glycerol kinase</fullName>
        <ecNumber evidence="1">2.7.1.30</ecNumber>
    </recommendedName>
    <alternativeName>
        <fullName evidence="1">ATP:glycerol 3-phosphotransferase</fullName>
    </alternativeName>
    <alternativeName>
        <fullName evidence="1">Glycerokinase</fullName>
        <shortName evidence="1">GK</shortName>
    </alternativeName>
</protein>